<name>SYR_MALP2</name>
<dbReference type="EC" id="6.1.1.19" evidence="1"/>
<dbReference type="EMBL" id="BA000026">
    <property type="protein sequence ID" value="BAC44402.1"/>
    <property type="molecule type" value="Genomic_DNA"/>
</dbReference>
<dbReference type="RefSeq" id="WP_011077434.1">
    <property type="nucleotide sequence ID" value="NC_004432.1"/>
</dbReference>
<dbReference type="SMR" id="Q8EVF2"/>
<dbReference type="FunCoup" id="Q8EVF2">
    <property type="interactions" value="231"/>
</dbReference>
<dbReference type="STRING" id="272633.gene:10731729"/>
<dbReference type="KEGG" id="mpe:MYPE6120"/>
<dbReference type="eggNOG" id="COG0018">
    <property type="taxonomic scope" value="Bacteria"/>
</dbReference>
<dbReference type="HOGENOM" id="CLU_006406_0_1_14"/>
<dbReference type="InParanoid" id="Q8EVF2"/>
<dbReference type="Proteomes" id="UP000002522">
    <property type="component" value="Chromosome"/>
</dbReference>
<dbReference type="GO" id="GO:0005737">
    <property type="term" value="C:cytoplasm"/>
    <property type="evidence" value="ECO:0007669"/>
    <property type="project" value="UniProtKB-SubCell"/>
</dbReference>
<dbReference type="GO" id="GO:0004814">
    <property type="term" value="F:arginine-tRNA ligase activity"/>
    <property type="evidence" value="ECO:0007669"/>
    <property type="project" value="UniProtKB-UniRule"/>
</dbReference>
<dbReference type="GO" id="GO:0005524">
    <property type="term" value="F:ATP binding"/>
    <property type="evidence" value="ECO:0007669"/>
    <property type="project" value="UniProtKB-UniRule"/>
</dbReference>
<dbReference type="GO" id="GO:0006420">
    <property type="term" value="P:arginyl-tRNA aminoacylation"/>
    <property type="evidence" value="ECO:0007669"/>
    <property type="project" value="UniProtKB-UniRule"/>
</dbReference>
<dbReference type="CDD" id="cd00671">
    <property type="entry name" value="ArgRS_core"/>
    <property type="match status" value="1"/>
</dbReference>
<dbReference type="FunFam" id="3.40.50.620:FF:000062">
    <property type="entry name" value="Arginine--tRNA ligase"/>
    <property type="match status" value="1"/>
</dbReference>
<dbReference type="Gene3D" id="3.30.1360.70">
    <property type="entry name" value="Arginyl tRNA synthetase N-terminal domain"/>
    <property type="match status" value="1"/>
</dbReference>
<dbReference type="Gene3D" id="3.40.50.620">
    <property type="entry name" value="HUPs"/>
    <property type="match status" value="1"/>
</dbReference>
<dbReference type="Gene3D" id="1.10.730.10">
    <property type="entry name" value="Isoleucyl-tRNA Synthetase, Domain 1"/>
    <property type="match status" value="1"/>
</dbReference>
<dbReference type="HAMAP" id="MF_00123">
    <property type="entry name" value="Arg_tRNA_synth"/>
    <property type="match status" value="1"/>
</dbReference>
<dbReference type="InterPro" id="IPR001412">
    <property type="entry name" value="aa-tRNA-synth_I_CS"/>
</dbReference>
<dbReference type="InterPro" id="IPR001278">
    <property type="entry name" value="Arg-tRNA-ligase"/>
</dbReference>
<dbReference type="InterPro" id="IPR005148">
    <property type="entry name" value="Arg-tRNA-synth_N"/>
</dbReference>
<dbReference type="InterPro" id="IPR036695">
    <property type="entry name" value="Arg-tRNA-synth_N_sf"/>
</dbReference>
<dbReference type="InterPro" id="IPR035684">
    <property type="entry name" value="ArgRS_core"/>
</dbReference>
<dbReference type="InterPro" id="IPR008909">
    <property type="entry name" value="DALR_anticod-bd"/>
</dbReference>
<dbReference type="InterPro" id="IPR014729">
    <property type="entry name" value="Rossmann-like_a/b/a_fold"/>
</dbReference>
<dbReference type="InterPro" id="IPR009080">
    <property type="entry name" value="tRNAsynth_Ia_anticodon-bd"/>
</dbReference>
<dbReference type="NCBIfam" id="TIGR00456">
    <property type="entry name" value="argS"/>
    <property type="match status" value="1"/>
</dbReference>
<dbReference type="PANTHER" id="PTHR11956:SF5">
    <property type="entry name" value="ARGININE--TRNA LIGASE, CYTOPLASMIC"/>
    <property type="match status" value="1"/>
</dbReference>
<dbReference type="PANTHER" id="PTHR11956">
    <property type="entry name" value="ARGINYL-TRNA SYNTHETASE"/>
    <property type="match status" value="1"/>
</dbReference>
<dbReference type="Pfam" id="PF03485">
    <property type="entry name" value="Arg_tRNA_synt_N"/>
    <property type="match status" value="1"/>
</dbReference>
<dbReference type="Pfam" id="PF05746">
    <property type="entry name" value="DALR_1"/>
    <property type="match status" value="1"/>
</dbReference>
<dbReference type="Pfam" id="PF00750">
    <property type="entry name" value="tRNA-synt_1d"/>
    <property type="match status" value="1"/>
</dbReference>
<dbReference type="PRINTS" id="PR01038">
    <property type="entry name" value="TRNASYNTHARG"/>
</dbReference>
<dbReference type="SMART" id="SM01016">
    <property type="entry name" value="Arg_tRNA_synt_N"/>
    <property type="match status" value="1"/>
</dbReference>
<dbReference type="SMART" id="SM00836">
    <property type="entry name" value="DALR_1"/>
    <property type="match status" value="1"/>
</dbReference>
<dbReference type="SUPFAM" id="SSF47323">
    <property type="entry name" value="Anticodon-binding domain of a subclass of class I aminoacyl-tRNA synthetases"/>
    <property type="match status" value="1"/>
</dbReference>
<dbReference type="SUPFAM" id="SSF55190">
    <property type="entry name" value="Arginyl-tRNA synthetase (ArgRS), N-terminal 'additional' domain"/>
    <property type="match status" value="1"/>
</dbReference>
<dbReference type="SUPFAM" id="SSF52374">
    <property type="entry name" value="Nucleotidylyl transferase"/>
    <property type="match status" value="1"/>
</dbReference>
<dbReference type="PROSITE" id="PS00178">
    <property type="entry name" value="AA_TRNA_LIGASE_I"/>
    <property type="match status" value="1"/>
</dbReference>
<organism>
    <name type="scientific">Malacoplasma penetrans (strain HF-2)</name>
    <name type="common">Mycoplasma penetrans</name>
    <dbReference type="NCBI Taxonomy" id="272633"/>
    <lineage>
        <taxon>Bacteria</taxon>
        <taxon>Bacillati</taxon>
        <taxon>Mycoplasmatota</taxon>
        <taxon>Mycoplasmoidales</taxon>
        <taxon>Mycoplasmoidaceae</taxon>
        <taxon>Malacoplasma</taxon>
    </lineage>
</organism>
<gene>
    <name evidence="1" type="primary">argS</name>
    <name type="ordered locus">MYPE6120</name>
</gene>
<proteinExistence type="inferred from homology"/>
<protein>
    <recommendedName>
        <fullName evidence="1">Arginine--tRNA ligase</fullName>
        <ecNumber evidence="1">6.1.1.19</ecNumber>
    </recommendedName>
    <alternativeName>
        <fullName evidence="1">Arginyl-tRNA synthetase</fullName>
        <shortName evidence="1">ArgRS</shortName>
    </alternativeName>
</protein>
<accession>Q8EVF2</accession>
<keyword id="KW-0030">Aminoacyl-tRNA synthetase</keyword>
<keyword id="KW-0067">ATP-binding</keyword>
<keyword id="KW-0963">Cytoplasm</keyword>
<keyword id="KW-0436">Ligase</keyword>
<keyword id="KW-0547">Nucleotide-binding</keyword>
<keyword id="KW-0648">Protein biosynthesis</keyword>
<keyword id="KW-1185">Reference proteome</keyword>
<comment type="catalytic activity">
    <reaction evidence="1">
        <text>tRNA(Arg) + L-arginine + ATP = L-arginyl-tRNA(Arg) + AMP + diphosphate</text>
        <dbReference type="Rhea" id="RHEA:20301"/>
        <dbReference type="Rhea" id="RHEA-COMP:9658"/>
        <dbReference type="Rhea" id="RHEA-COMP:9673"/>
        <dbReference type="ChEBI" id="CHEBI:30616"/>
        <dbReference type="ChEBI" id="CHEBI:32682"/>
        <dbReference type="ChEBI" id="CHEBI:33019"/>
        <dbReference type="ChEBI" id="CHEBI:78442"/>
        <dbReference type="ChEBI" id="CHEBI:78513"/>
        <dbReference type="ChEBI" id="CHEBI:456215"/>
        <dbReference type="EC" id="6.1.1.19"/>
    </reaction>
</comment>
<comment type="subunit">
    <text evidence="1">Monomer.</text>
</comment>
<comment type="subcellular location">
    <subcellularLocation>
        <location evidence="1">Cytoplasm</location>
    </subcellularLocation>
</comment>
<comment type="similarity">
    <text evidence="1">Belongs to the class-I aminoacyl-tRNA synthetase family.</text>
</comment>
<sequence>MIKTTIIASIKDLIKDAVKDKFKITIDLNDFVVDKAKSIEFGDFYSNVAMILASKLKKNPILIAEEICEYLKNHKTNLFESTEAVKPGYINVFLSNSVKSDLFKQINKDKDTYGIFEPKKVAYNIEFVSANPTGSLHIGHARNAALGQTLGNVWKAYGYTIEQEYYINDGGNQINNLGMSVFYRYLQKCGKDVQMEEDFYQGSEPIAVAELIYKEHKDKFVNVKYSATKIEDEKVFDFFRDFSKTELMNIIKKDLKDFSVHFDRYFPESKIYEMKLVDPTIKKLGKYVYEKDGALWLKTTEFGDDKDRVIVKSDKSFTYFMPDIAYHDIKATRTINGLKTDKIFNIWGADHASYVDRMTVALQCLGFKKDIMHVIVMQMVKLTKNGKEFKMSKRSGNSLTLRDLINAIGVDNSRWELISQAAESHIEIDVEKFTSADSTSNLSYVLYAYSRIQKILEKNESLLKESKSYNTDLLTNLKEKDMIAMLFYYPQTIANIAKSYEVHKIPIFLYTLANLLHSYYSEVKIIDESNKELLIQRLHLLQCVNQVIKNGLKLLDIEAKVLNK</sequence>
<reference key="1">
    <citation type="journal article" date="2002" name="Nucleic Acids Res.">
        <title>The complete genomic sequence of Mycoplasma penetrans, an intracellular bacterial pathogen in humans.</title>
        <authorList>
            <person name="Sasaki Y."/>
            <person name="Ishikawa J."/>
            <person name="Yamashita A."/>
            <person name="Oshima K."/>
            <person name="Kenri T."/>
            <person name="Furuya K."/>
            <person name="Yoshino C."/>
            <person name="Horino A."/>
            <person name="Shiba T."/>
            <person name="Sasaki T."/>
            <person name="Hattori M."/>
        </authorList>
    </citation>
    <scope>NUCLEOTIDE SEQUENCE [LARGE SCALE GENOMIC DNA]</scope>
    <source>
        <strain>HF-2</strain>
    </source>
</reference>
<feature type="chain" id="PRO_0000242052" description="Arginine--tRNA ligase">
    <location>
        <begin position="1"/>
        <end position="564"/>
    </location>
</feature>
<feature type="short sequence motif" description="'HIGH' region">
    <location>
        <begin position="130"/>
        <end position="140"/>
    </location>
</feature>
<evidence type="ECO:0000255" key="1">
    <source>
        <dbReference type="HAMAP-Rule" id="MF_00123"/>
    </source>
</evidence>